<keyword id="KW-0067">ATP-binding</keyword>
<keyword id="KW-0413">Isomerase</keyword>
<keyword id="KW-0456">Lyase</keyword>
<keyword id="KW-0479">Metal-binding</keyword>
<keyword id="KW-0511">Multifunctional enzyme</keyword>
<keyword id="KW-0520">NAD</keyword>
<keyword id="KW-0521">NADP</keyword>
<keyword id="KW-0547">Nucleotide-binding</keyword>
<keyword id="KW-0630">Potassium</keyword>
<keyword id="KW-1185">Reference proteome</keyword>
<name>NNR_MYCLE</name>
<accession>P37391</accession>
<accession>Q9CCV5</accession>
<feature type="chain" id="PRO_0000119047" description="Bifunctional NAD(P)H-hydrate repair enzyme Nnr">
    <location>
        <begin position="1"/>
        <end position="473"/>
    </location>
</feature>
<feature type="domain" description="YjeF N-terminal">
    <location>
        <begin position="10"/>
        <end position="205"/>
    </location>
</feature>
<feature type="domain" description="YjeF C-terminal">
    <location>
        <begin position="210"/>
        <end position="473"/>
    </location>
</feature>
<feature type="region of interest" description="NAD(P)H-hydrate epimerase" evidence="1">
    <location>
        <begin position="1"/>
        <end position="203"/>
    </location>
</feature>
<feature type="region of interest" description="NADPHX 1; for epimerase activity" evidence="1">
    <location>
        <begin position="62"/>
        <end position="66"/>
    </location>
</feature>
<feature type="region of interest" description="NADPHX 1; for epimerase activity" evidence="1">
    <location>
        <begin position="123"/>
        <end position="129"/>
    </location>
</feature>
<feature type="region of interest" description="ADP-dependent (S)-NAD(P)H-hydrate dehydratase" evidence="1">
    <location>
        <begin position="210"/>
        <end position="473"/>
    </location>
</feature>
<feature type="region of interest" description="NADPHX 2; for dehydratase activity" evidence="1">
    <location>
        <begin position="348"/>
        <end position="354"/>
    </location>
</feature>
<feature type="binding site" evidence="1">
    <location>
        <position position="63"/>
    </location>
    <ligand>
        <name>K(+)</name>
        <dbReference type="ChEBI" id="CHEBI:29103"/>
    </ligand>
</feature>
<feature type="binding site" evidence="1">
    <location>
        <position position="119"/>
    </location>
    <ligand>
        <name>K(+)</name>
        <dbReference type="ChEBI" id="CHEBI:29103"/>
    </ligand>
</feature>
<feature type="binding site" evidence="1">
    <location>
        <position position="152"/>
    </location>
    <ligand>
        <name>(6S)-NADPHX</name>
        <dbReference type="ChEBI" id="CHEBI:64076"/>
        <label>1</label>
        <note>for epimerase activity</note>
    </ligand>
</feature>
<feature type="binding site" evidence="1">
    <location>
        <position position="155"/>
    </location>
    <ligand>
        <name>K(+)</name>
        <dbReference type="ChEBI" id="CHEBI:29103"/>
    </ligand>
</feature>
<feature type="binding site" evidence="1">
    <location>
        <position position="298"/>
    </location>
    <ligand>
        <name>(6S)-NADPHX</name>
        <dbReference type="ChEBI" id="CHEBI:64076"/>
        <label>2</label>
        <note>for dehydratase activity</note>
    </ligand>
</feature>
<feature type="binding site" evidence="1">
    <location>
        <begin position="382"/>
        <end position="386"/>
    </location>
    <ligand>
        <name>ADP</name>
        <dbReference type="ChEBI" id="CHEBI:456216"/>
    </ligand>
</feature>
<feature type="binding site" evidence="1">
    <location>
        <begin position="402"/>
        <end position="411"/>
    </location>
    <ligand>
        <name>ADP</name>
        <dbReference type="ChEBI" id="CHEBI:456216"/>
    </ligand>
</feature>
<feature type="binding site" evidence="1">
    <location>
        <position position="412"/>
    </location>
    <ligand>
        <name>(6S)-NADPHX</name>
        <dbReference type="ChEBI" id="CHEBI:64076"/>
        <label>2</label>
        <note>for dehydratase activity</note>
    </ligand>
</feature>
<feature type="sequence conflict" description="In Ref. 1." evidence="2" ref="1">
    <original>DA</original>
    <variation>ES</variation>
    <location>
        <begin position="66"/>
        <end position="67"/>
    </location>
</feature>
<protein>
    <recommendedName>
        <fullName>Bifunctional NAD(P)H-hydrate repair enzyme Nnr</fullName>
    </recommendedName>
    <alternativeName>
        <fullName>Nicotinamide nucleotide repair protein</fullName>
    </alternativeName>
    <domain>
        <recommendedName>
            <fullName>ADP-dependent (S)-NAD(P)H-hydrate dehydratase</fullName>
            <ecNumber>4.2.1.136</ecNumber>
        </recommendedName>
        <alternativeName>
            <fullName>ADP-dependent NAD(P)HX dehydratase</fullName>
        </alternativeName>
    </domain>
    <domain>
        <recommendedName>
            <fullName>NAD(P)H-hydrate epimerase</fullName>
            <ecNumber>5.1.99.6</ecNumber>
        </recommendedName>
        <alternativeName>
            <fullName>NAD(P)HX epimerase</fullName>
        </alternativeName>
    </domain>
</protein>
<evidence type="ECO:0000250" key="1"/>
<evidence type="ECO:0000305" key="2"/>
<reference key="1">
    <citation type="submission" date="1994-03" db="EMBL/GenBank/DDBJ databases">
        <authorList>
            <person name="Smith D.R."/>
            <person name="Robison K."/>
        </authorList>
    </citation>
    <scope>NUCLEOTIDE SEQUENCE [GENOMIC DNA]</scope>
</reference>
<reference key="2">
    <citation type="journal article" date="2001" name="Nature">
        <title>Massive gene decay in the leprosy bacillus.</title>
        <authorList>
            <person name="Cole S.T."/>
            <person name="Eiglmeier K."/>
            <person name="Parkhill J."/>
            <person name="James K.D."/>
            <person name="Thomson N.R."/>
            <person name="Wheeler P.R."/>
            <person name="Honore N."/>
            <person name="Garnier T."/>
            <person name="Churcher C.M."/>
            <person name="Harris D.E."/>
            <person name="Mungall K.L."/>
            <person name="Basham D."/>
            <person name="Brown D."/>
            <person name="Chillingworth T."/>
            <person name="Connor R."/>
            <person name="Davies R.M."/>
            <person name="Devlin K."/>
            <person name="Duthoy S."/>
            <person name="Feltwell T."/>
            <person name="Fraser A."/>
            <person name="Hamlin N."/>
            <person name="Holroyd S."/>
            <person name="Hornsby T."/>
            <person name="Jagels K."/>
            <person name="Lacroix C."/>
            <person name="Maclean J."/>
            <person name="Moule S."/>
            <person name="Murphy L.D."/>
            <person name="Oliver K."/>
            <person name="Quail M.A."/>
            <person name="Rajandream M.A."/>
            <person name="Rutherford K.M."/>
            <person name="Rutter S."/>
            <person name="Seeger K."/>
            <person name="Simon S."/>
            <person name="Simmonds M."/>
            <person name="Skelton J."/>
            <person name="Squares R."/>
            <person name="Squares S."/>
            <person name="Stevens K."/>
            <person name="Taylor K."/>
            <person name="Whitehead S."/>
            <person name="Woodward J.R."/>
            <person name="Barrell B.G."/>
        </authorList>
    </citation>
    <scope>NUCLEOTIDE SEQUENCE [LARGE SCALE GENOMIC DNA]</scope>
    <source>
        <strain>TN</strain>
    </source>
</reference>
<dbReference type="EC" id="4.2.1.136"/>
<dbReference type="EC" id="5.1.99.6"/>
<dbReference type="EMBL" id="U00020">
    <property type="protein sequence ID" value="AAA17298.1"/>
    <property type="status" value="ALT_FRAME"/>
    <property type="molecule type" value="Genomic_DNA"/>
</dbReference>
<dbReference type="EMBL" id="AL583918">
    <property type="protein sequence ID" value="CAC29881.1"/>
    <property type="molecule type" value="Genomic_DNA"/>
</dbReference>
<dbReference type="PIR" id="E86955">
    <property type="entry name" value="E86955"/>
</dbReference>
<dbReference type="PIR" id="S72984">
    <property type="entry name" value="S72984"/>
</dbReference>
<dbReference type="RefSeq" id="NP_301366.1">
    <property type="nucleotide sequence ID" value="NC_002677.1"/>
</dbReference>
<dbReference type="RefSeq" id="WP_010907690.1">
    <property type="nucleotide sequence ID" value="NC_002677.1"/>
</dbReference>
<dbReference type="SMR" id="P37391"/>
<dbReference type="STRING" id="272631.gene:17574192"/>
<dbReference type="KEGG" id="mle:ML0373"/>
<dbReference type="PATRIC" id="fig|272631.5.peg.630"/>
<dbReference type="Leproma" id="ML0373"/>
<dbReference type="eggNOG" id="COG0062">
    <property type="taxonomic scope" value="Bacteria"/>
</dbReference>
<dbReference type="eggNOG" id="COG0063">
    <property type="taxonomic scope" value="Bacteria"/>
</dbReference>
<dbReference type="HOGENOM" id="CLU_024853_4_0_11"/>
<dbReference type="OrthoDB" id="9806925at2"/>
<dbReference type="Proteomes" id="UP000000806">
    <property type="component" value="Chromosome"/>
</dbReference>
<dbReference type="GO" id="GO:0052855">
    <property type="term" value="F:ADP-dependent NAD(P)H-hydrate dehydratase activity"/>
    <property type="evidence" value="ECO:0007669"/>
    <property type="project" value="UniProtKB-UniRule"/>
</dbReference>
<dbReference type="GO" id="GO:0005524">
    <property type="term" value="F:ATP binding"/>
    <property type="evidence" value="ECO:0007669"/>
    <property type="project" value="UniProtKB-KW"/>
</dbReference>
<dbReference type="GO" id="GO:0046872">
    <property type="term" value="F:metal ion binding"/>
    <property type="evidence" value="ECO:0007669"/>
    <property type="project" value="UniProtKB-KW"/>
</dbReference>
<dbReference type="GO" id="GO:0052856">
    <property type="term" value="F:NAD(P)HX epimerase activity"/>
    <property type="evidence" value="ECO:0007669"/>
    <property type="project" value="UniProtKB-UniRule"/>
</dbReference>
<dbReference type="GO" id="GO:0110051">
    <property type="term" value="P:metabolite repair"/>
    <property type="evidence" value="ECO:0007669"/>
    <property type="project" value="TreeGrafter"/>
</dbReference>
<dbReference type="GO" id="GO:0046496">
    <property type="term" value="P:nicotinamide nucleotide metabolic process"/>
    <property type="evidence" value="ECO:0007669"/>
    <property type="project" value="UniProtKB-UniRule"/>
</dbReference>
<dbReference type="CDD" id="cd01171">
    <property type="entry name" value="YXKO-related"/>
    <property type="match status" value="1"/>
</dbReference>
<dbReference type="FunFam" id="3.40.50.10260:FF:000008">
    <property type="entry name" value="Multifunctional fusion protein"/>
    <property type="match status" value="1"/>
</dbReference>
<dbReference type="Gene3D" id="3.40.1190.20">
    <property type="match status" value="1"/>
</dbReference>
<dbReference type="Gene3D" id="3.40.50.10260">
    <property type="entry name" value="YjeF N-terminal domain"/>
    <property type="match status" value="1"/>
</dbReference>
<dbReference type="HAMAP" id="MF_01965">
    <property type="entry name" value="NADHX_dehydratase"/>
    <property type="match status" value="1"/>
</dbReference>
<dbReference type="HAMAP" id="MF_01966">
    <property type="entry name" value="NADHX_epimerase"/>
    <property type="match status" value="1"/>
</dbReference>
<dbReference type="InterPro" id="IPR017953">
    <property type="entry name" value="Carbohydrate_kinase_pred_CS"/>
</dbReference>
<dbReference type="InterPro" id="IPR000631">
    <property type="entry name" value="CARKD"/>
</dbReference>
<dbReference type="InterPro" id="IPR030677">
    <property type="entry name" value="Nnr"/>
</dbReference>
<dbReference type="InterPro" id="IPR029056">
    <property type="entry name" value="Ribokinase-like"/>
</dbReference>
<dbReference type="InterPro" id="IPR004443">
    <property type="entry name" value="YjeF_N_dom"/>
</dbReference>
<dbReference type="InterPro" id="IPR036652">
    <property type="entry name" value="YjeF_N_dom_sf"/>
</dbReference>
<dbReference type="NCBIfam" id="TIGR00196">
    <property type="entry name" value="yjeF_cterm"/>
    <property type="match status" value="1"/>
</dbReference>
<dbReference type="NCBIfam" id="TIGR00197">
    <property type="entry name" value="yjeF_nterm"/>
    <property type="match status" value="1"/>
</dbReference>
<dbReference type="PANTHER" id="PTHR12592:SF0">
    <property type="entry name" value="ATP-DEPENDENT (S)-NAD(P)H-HYDRATE DEHYDRATASE"/>
    <property type="match status" value="1"/>
</dbReference>
<dbReference type="PANTHER" id="PTHR12592">
    <property type="entry name" value="ATP-DEPENDENT (S)-NAD(P)H-HYDRATE DEHYDRATASE FAMILY MEMBER"/>
    <property type="match status" value="1"/>
</dbReference>
<dbReference type="Pfam" id="PF01256">
    <property type="entry name" value="Carb_kinase"/>
    <property type="match status" value="1"/>
</dbReference>
<dbReference type="Pfam" id="PF03853">
    <property type="entry name" value="YjeF_N"/>
    <property type="match status" value="1"/>
</dbReference>
<dbReference type="PIRSF" id="PIRSF017184">
    <property type="entry name" value="Nnr"/>
    <property type="match status" value="1"/>
</dbReference>
<dbReference type="SUPFAM" id="SSF53613">
    <property type="entry name" value="Ribokinase-like"/>
    <property type="match status" value="1"/>
</dbReference>
<dbReference type="SUPFAM" id="SSF64153">
    <property type="entry name" value="YjeF N-terminal domain-like"/>
    <property type="match status" value="1"/>
</dbReference>
<dbReference type="PROSITE" id="PS01049">
    <property type="entry name" value="YJEF_C_1"/>
    <property type="match status" value="1"/>
</dbReference>
<dbReference type="PROSITE" id="PS01050">
    <property type="entry name" value="YJEF_C_2"/>
    <property type="match status" value="1"/>
</dbReference>
<dbReference type="PROSITE" id="PS51383">
    <property type="entry name" value="YJEF_C_3"/>
    <property type="match status" value="1"/>
</dbReference>
<dbReference type="PROSITE" id="PS51385">
    <property type="entry name" value="YJEF_N"/>
    <property type="match status" value="1"/>
</dbReference>
<proteinExistence type="inferred from homology"/>
<organism>
    <name type="scientific">Mycobacterium leprae (strain TN)</name>
    <dbReference type="NCBI Taxonomy" id="272631"/>
    <lineage>
        <taxon>Bacteria</taxon>
        <taxon>Bacillati</taxon>
        <taxon>Actinomycetota</taxon>
        <taxon>Actinomycetes</taxon>
        <taxon>Mycobacteriales</taxon>
        <taxon>Mycobacteriaceae</taxon>
        <taxon>Mycobacterium</taxon>
    </lineage>
</organism>
<comment type="function">
    <text evidence="1">Bifunctional enzyme that catalyzes the epimerization of the S- and R-forms of NAD(P)HX and the dehydration of the S-form of NAD(P)HX at the expense of ADP, which is converted to AMP. This allows the repair of both epimers of NAD(P)HX, a damaged form of NAD(P)H that is a result of enzymatic or heat-dependent hydration (By similarity).</text>
</comment>
<comment type="catalytic activity">
    <reaction>
        <text>(6S)-NADHX + ADP = AMP + phosphate + NADH + H(+)</text>
        <dbReference type="Rhea" id="RHEA:32223"/>
        <dbReference type="ChEBI" id="CHEBI:15378"/>
        <dbReference type="ChEBI" id="CHEBI:43474"/>
        <dbReference type="ChEBI" id="CHEBI:57945"/>
        <dbReference type="ChEBI" id="CHEBI:64074"/>
        <dbReference type="ChEBI" id="CHEBI:456215"/>
        <dbReference type="ChEBI" id="CHEBI:456216"/>
        <dbReference type="EC" id="4.2.1.136"/>
    </reaction>
</comment>
<comment type="catalytic activity">
    <reaction>
        <text>(6S)-NADPHX + ADP = AMP + phosphate + NADPH + H(+)</text>
        <dbReference type="Rhea" id="RHEA:32235"/>
        <dbReference type="ChEBI" id="CHEBI:15378"/>
        <dbReference type="ChEBI" id="CHEBI:43474"/>
        <dbReference type="ChEBI" id="CHEBI:57783"/>
        <dbReference type="ChEBI" id="CHEBI:64076"/>
        <dbReference type="ChEBI" id="CHEBI:456215"/>
        <dbReference type="ChEBI" id="CHEBI:456216"/>
        <dbReference type="EC" id="4.2.1.136"/>
    </reaction>
</comment>
<comment type="catalytic activity">
    <reaction>
        <text>(6R)-NADHX = (6S)-NADHX</text>
        <dbReference type="Rhea" id="RHEA:32215"/>
        <dbReference type="ChEBI" id="CHEBI:64074"/>
        <dbReference type="ChEBI" id="CHEBI:64075"/>
        <dbReference type="EC" id="5.1.99.6"/>
    </reaction>
</comment>
<comment type="catalytic activity">
    <reaction>
        <text>(6R)-NADPHX = (6S)-NADPHX</text>
        <dbReference type="Rhea" id="RHEA:32227"/>
        <dbReference type="ChEBI" id="CHEBI:64076"/>
        <dbReference type="ChEBI" id="CHEBI:64077"/>
        <dbReference type="EC" id="5.1.99.6"/>
    </reaction>
</comment>
<comment type="cofactor">
    <cofactor evidence="1">
        <name>K(+)</name>
        <dbReference type="ChEBI" id="CHEBI:29103"/>
    </cofactor>
    <text evidence="1">Binds 1 potassium ion per subunit.</text>
</comment>
<comment type="similarity">
    <text evidence="2">In the N-terminal section; belongs to the NnrE/AIBP family.</text>
</comment>
<comment type="similarity">
    <text evidence="2">In the C-terminal section; belongs to the NnrD/CARKD family.</text>
</comment>
<comment type="sequence caution" evidence="2">
    <conflict type="frameshift">
        <sequence resource="EMBL-CDS" id="AAA17298"/>
    </conflict>
</comment>
<sequence length="473" mass="47227">MRHYYSVAAIRDAEASLLASLPDGVLMKRAAYGLASVIIRELAVRTGGVTGRRVCAVVGSGDNGGDALWAATFLRRRGAAADAVLLNPDRVHRKALVAFRKAGGRIVENVSAATDLVIDGVVGISGSGPLRPAAAAVFATVSASGVPVVAVDLPSGIDVVTGVINGPAVHAALTVTFGGLKPVHALADCGDVTLVDIGLDLPDSDILGLQAADVAAYWPVPGVHDDKYTQGVTGVLAGSSTYPGAAVLCTGAAVAATSGMVRYAGSAYTQVLAHWPEVIASATPTAAGRVQSWVVGPGLGIDATATAALWFALETDLPVLVDADGLTMLAAHPDLVINRNAPTVLTPHASEFARLAGTPPGDDRVGACRKLADSFGATVLLKGNVTVIADPGGPVYLNPAGQSWAATAGSGDVLSGMIGALLAAGLPAAEAAAAAAFVHARAAALSAADPGPGDVPTSASRMVSHIRTALAAL</sequence>
<gene>
    <name type="primary">nnr</name>
    <name type="ordered locus">ML0373</name>
    <name type="ORF">B229_C2_201</name>
    <name type="ORF">u229g</name>
</gene>